<evidence type="ECO:0000255" key="1">
    <source>
        <dbReference type="HAMAP-Rule" id="MF_00337"/>
    </source>
</evidence>
<protein>
    <recommendedName>
        <fullName evidence="1">Exodeoxyribonuclease 7 small subunit</fullName>
        <ecNumber evidence="1">3.1.11.6</ecNumber>
    </recommendedName>
    <alternativeName>
        <fullName evidence="1">Exodeoxyribonuclease VII small subunit</fullName>
        <shortName evidence="1">Exonuclease VII small subunit</shortName>
    </alternativeName>
</protein>
<dbReference type="EC" id="3.1.11.6" evidence="1"/>
<dbReference type="EMBL" id="AM421808">
    <property type="protein sequence ID" value="CAM09570.1"/>
    <property type="molecule type" value="Genomic_DNA"/>
</dbReference>
<dbReference type="SMR" id="A1KRU1"/>
<dbReference type="KEGG" id="nmc:NMC0256"/>
<dbReference type="HOGENOM" id="CLU_145918_2_0_4"/>
<dbReference type="Proteomes" id="UP000002286">
    <property type="component" value="Chromosome"/>
</dbReference>
<dbReference type="GO" id="GO:0005829">
    <property type="term" value="C:cytosol"/>
    <property type="evidence" value="ECO:0007669"/>
    <property type="project" value="TreeGrafter"/>
</dbReference>
<dbReference type="GO" id="GO:0009318">
    <property type="term" value="C:exodeoxyribonuclease VII complex"/>
    <property type="evidence" value="ECO:0007669"/>
    <property type="project" value="InterPro"/>
</dbReference>
<dbReference type="GO" id="GO:0008855">
    <property type="term" value="F:exodeoxyribonuclease VII activity"/>
    <property type="evidence" value="ECO:0007669"/>
    <property type="project" value="UniProtKB-UniRule"/>
</dbReference>
<dbReference type="GO" id="GO:0006308">
    <property type="term" value="P:DNA catabolic process"/>
    <property type="evidence" value="ECO:0007669"/>
    <property type="project" value="UniProtKB-UniRule"/>
</dbReference>
<dbReference type="FunFam" id="1.10.287.1040:FF:000012">
    <property type="entry name" value="Exodeoxyribonuclease 7 small subunit"/>
    <property type="match status" value="1"/>
</dbReference>
<dbReference type="Gene3D" id="1.10.287.1040">
    <property type="entry name" value="Exonuclease VII, small subunit"/>
    <property type="match status" value="1"/>
</dbReference>
<dbReference type="HAMAP" id="MF_00337">
    <property type="entry name" value="Exonuc_7_S"/>
    <property type="match status" value="1"/>
</dbReference>
<dbReference type="InterPro" id="IPR003761">
    <property type="entry name" value="Exonuc_VII_S"/>
</dbReference>
<dbReference type="InterPro" id="IPR037004">
    <property type="entry name" value="Exonuc_VII_ssu_sf"/>
</dbReference>
<dbReference type="NCBIfam" id="NF002141">
    <property type="entry name" value="PRK00977.1-5"/>
    <property type="match status" value="1"/>
</dbReference>
<dbReference type="NCBIfam" id="TIGR01280">
    <property type="entry name" value="xseB"/>
    <property type="match status" value="1"/>
</dbReference>
<dbReference type="PANTHER" id="PTHR34137">
    <property type="entry name" value="EXODEOXYRIBONUCLEASE 7 SMALL SUBUNIT"/>
    <property type="match status" value="1"/>
</dbReference>
<dbReference type="PANTHER" id="PTHR34137:SF1">
    <property type="entry name" value="EXODEOXYRIBONUCLEASE 7 SMALL SUBUNIT"/>
    <property type="match status" value="1"/>
</dbReference>
<dbReference type="Pfam" id="PF02609">
    <property type="entry name" value="Exonuc_VII_S"/>
    <property type="match status" value="1"/>
</dbReference>
<dbReference type="PIRSF" id="PIRSF006488">
    <property type="entry name" value="Exonuc_VII_S"/>
    <property type="match status" value="1"/>
</dbReference>
<dbReference type="SUPFAM" id="SSF116842">
    <property type="entry name" value="XseB-like"/>
    <property type="match status" value="1"/>
</dbReference>
<name>EX7S_NEIMF</name>
<reference key="1">
    <citation type="journal article" date="2007" name="PLoS Genet.">
        <title>Meningococcal genetic variation mechanisms viewed through comparative analysis of serogroup C strain FAM18.</title>
        <authorList>
            <person name="Bentley S.D."/>
            <person name="Vernikos G.S."/>
            <person name="Snyder L.A.S."/>
            <person name="Churcher C."/>
            <person name="Arrowsmith C."/>
            <person name="Chillingworth T."/>
            <person name="Cronin A."/>
            <person name="Davis P.H."/>
            <person name="Holroyd N.E."/>
            <person name="Jagels K."/>
            <person name="Maddison M."/>
            <person name="Moule S."/>
            <person name="Rabbinowitsch E."/>
            <person name="Sharp S."/>
            <person name="Unwin L."/>
            <person name="Whitehead S."/>
            <person name="Quail M.A."/>
            <person name="Achtman M."/>
            <person name="Barrell B.G."/>
            <person name="Saunders N.J."/>
            <person name="Parkhill J."/>
        </authorList>
    </citation>
    <scope>NUCLEOTIDE SEQUENCE [LARGE SCALE GENOMIC DNA]</scope>
    <source>
        <strain>ATCC 700532 / DSM 15464 / FAM18</strain>
    </source>
</reference>
<gene>
    <name evidence="1" type="primary">xseB</name>
    <name type="ordered locus">NMC0256</name>
</gene>
<feature type="chain" id="PRO_0000303727" description="Exodeoxyribonuclease 7 small subunit">
    <location>
        <begin position="1"/>
        <end position="74"/>
    </location>
</feature>
<accession>A1KRU1</accession>
<proteinExistence type="inferred from homology"/>
<sequence length="74" mass="8358">MKKITPKSFEEALSRLESLTQSMQGEMPLEDALAAYQEGNELVRYCQTKLAQVEQKLQVLDADGPKELNLESDE</sequence>
<comment type="function">
    <text evidence="1">Bidirectionally degrades single-stranded DNA into large acid-insoluble oligonucleotides, which are then degraded further into small acid-soluble oligonucleotides.</text>
</comment>
<comment type="catalytic activity">
    <reaction evidence="1">
        <text>Exonucleolytic cleavage in either 5'- to 3'- or 3'- to 5'-direction to yield nucleoside 5'-phosphates.</text>
        <dbReference type="EC" id="3.1.11.6"/>
    </reaction>
</comment>
<comment type="subunit">
    <text evidence="1">Heterooligomer composed of large and small subunits.</text>
</comment>
<comment type="subcellular location">
    <subcellularLocation>
        <location evidence="1">Cytoplasm</location>
    </subcellularLocation>
</comment>
<comment type="similarity">
    <text evidence="1">Belongs to the XseB family.</text>
</comment>
<keyword id="KW-0963">Cytoplasm</keyword>
<keyword id="KW-0269">Exonuclease</keyword>
<keyword id="KW-0378">Hydrolase</keyword>
<keyword id="KW-0540">Nuclease</keyword>
<organism>
    <name type="scientific">Neisseria meningitidis serogroup C / serotype 2a (strain ATCC 700532 / DSM 15464 / FAM18)</name>
    <dbReference type="NCBI Taxonomy" id="272831"/>
    <lineage>
        <taxon>Bacteria</taxon>
        <taxon>Pseudomonadati</taxon>
        <taxon>Pseudomonadota</taxon>
        <taxon>Betaproteobacteria</taxon>
        <taxon>Neisseriales</taxon>
        <taxon>Neisseriaceae</taxon>
        <taxon>Neisseria</taxon>
    </lineage>
</organism>